<proteinExistence type="inferred from homology"/>
<dbReference type="EC" id="1.1.1.205" evidence="1"/>
<dbReference type="EMBL" id="AE017341">
    <property type="protein sequence ID" value="AAW40949.1"/>
    <property type="molecule type" value="Genomic_DNA"/>
</dbReference>
<dbReference type="RefSeq" id="XP_566768.1">
    <property type="nucleotide sequence ID" value="XM_566768.2"/>
</dbReference>
<dbReference type="SMR" id="Q5KP44"/>
<dbReference type="FunCoup" id="Q5KP44">
    <property type="interactions" value="280"/>
</dbReference>
<dbReference type="STRING" id="214684.Q5KP44"/>
<dbReference type="BindingDB" id="Q5KP44"/>
<dbReference type="ChEMBL" id="CHEMBL4295605"/>
<dbReference type="DrugCentral" id="Q5KP44"/>
<dbReference type="PaxDb" id="214684-Q5KP44"/>
<dbReference type="EnsemblFungi" id="AAW40949">
    <property type="protein sequence ID" value="AAW40949"/>
    <property type="gene ID" value="CNA04240"/>
</dbReference>
<dbReference type="GeneID" id="3253376"/>
<dbReference type="KEGG" id="cne:CNA04240"/>
<dbReference type="VEuPathDB" id="FungiDB:CNA04240"/>
<dbReference type="eggNOG" id="KOG2550">
    <property type="taxonomic scope" value="Eukaryota"/>
</dbReference>
<dbReference type="HOGENOM" id="CLU_022552_2_1_1"/>
<dbReference type="InParanoid" id="Q5KP44"/>
<dbReference type="OMA" id="MGYCGAK"/>
<dbReference type="OrthoDB" id="416622at2759"/>
<dbReference type="UniPathway" id="UPA00601">
    <property type="reaction ID" value="UER00295"/>
</dbReference>
<dbReference type="Proteomes" id="UP000002149">
    <property type="component" value="Chromosome 1"/>
</dbReference>
<dbReference type="GO" id="GO:0005737">
    <property type="term" value="C:cytoplasm"/>
    <property type="evidence" value="ECO:0000318"/>
    <property type="project" value="GO_Central"/>
</dbReference>
<dbReference type="GO" id="GO:0003938">
    <property type="term" value="F:IMP dehydrogenase activity"/>
    <property type="evidence" value="ECO:0000318"/>
    <property type="project" value="GO_Central"/>
</dbReference>
<dbReference type="GO" id="GO:0046872">
    <property type="term" value="F:metal ion binding"/>
    <property type="evidence" value="ECO:0007669"/>
    <property type="project" value="UniProtKB-UniRule"/>
</dbReference>
<dbReference type="GO" id="GO:0000166">
    <property type="term" value="F:nucleotide binding"/>
    <property type="evidence" value="ECO:0007669"/>
    <property type="project" value="UniProtKB-UniRule"/>
</dbReference>
<dbReference type="GO" id="GO:0006177">
    <property type="term" value="P:GMP biosynthetic process"/>
    <property type="evidence" value="ECO:0007669"/>
    <property type="project" value="UniProtKB-UniRule"/>
</dbReference>
<dbReference type="GO" id="GO:0006183">
    <property type="term" value="P:GTP biosynthetic process"/>
    <property type="evidence" value="ECO:0000318"/>
    <property type="project" value="GO_Central"/>
</dbReference>
<dbReference type="CDD" id="cd04601">
    <property type="entry name" value="CBS_pair_IMPDH"/>
    <property type="match status" value="1"/>
</dbReference>
<dbReference type="CDD" id="cd00381">
    <property type="entry name" value="IMPDH"/>
    <property type="match status" value="1"/>
</dbReference>
<dbReference type="FunFam" id="3.20.20.70:FF:000007">
    <property type="entry name" value="Chromosome 19 SCAF14664, whole genome shotgun sequence"/>
    <property type="match status" value="1"/>
</dbReference>
<dbReference type="Gene3D" id="3.20.20.70">
    <property type="entry name" value="Aldolase class I"/>
    <property type="match status" value="1"/>
</dbReference>
<dbReference type="HAMAP" id="MF_01964">
    <property type="entry name" value="IMPDH"/>
    <property type="match status" value="1"/>
</dbReference>
<dbReference type="InterPro" id="IPR013785">
    <property type="entry name" value="Aldolase_TIM"/>
</dbReference>
<dbReference type="InterPro" id="IPR000644">
    <property type="entry name" value="CBS_dom"/>
</dbReference>
<dbReference type="InterPro" id="IPR046342">
    <property type="entry name" value="CBS_dom_sf"/>
</dbReference>
<dbReference type="InterPro" id="IPR005990">
    <property type="entry name" value="IMP_DH"/>
</dbReference>
<dbReference type="InterPro" id="IPR015875">
    <property type="entry name" value="IMP_DH/GMP_Rdtase_CS"/>
</dbReference>
<dbReference type="InterPro" id="IPR001093">
    <property type="entry name" value="IMP_DH_GMPRt"/>
</dbReference>
<dbReference type="NCBIfam" id="TIGR01302">
    <property type="entry name" value="IMP_dehydrog"/>
    <property type="match status" value="1"/>
</dbReference>
<dbReference type="PANTHER" id="PTHR11911:SF111">
    <property type="entry name" value="INOSINE-5'-MONOPHOSPHATE DEHYDROGENASE"/>
    <property type="match status" value="1"/>
</dbReference>
<dbReference type="PANTHER" id="PTHR11911">
    <property type="entry name" value="INOSINE-5-MONOPHOSPHATE DEHYDROGENASE RELATED"/>
    <property type="match status" value="1"/>
</dbReference>
<dbReference type="Pfam" id="PF00571">
    <property type="entry name" value="CBS"/>
    <property type="match status" value="2"/>
</dbReference>
<dbReference type="Pfam" id="PF00478">
    <property type="entry name" value="IMPDH"/>
    <property type="match status" value="1"/>
</dbReference>
<dbReference type="PIRSF" id="PIRSF000130">
    <property type="entry name" value="IMPDH"/>
    <property type="match status" value="1"/>
</dbReference>
<dbReference type="SMART" id="SM00116">
    <property type="entry name" value="CBS"/>
    <property type="match status" value="2"/>
</dbReference>
<dbReference type="SMART" id="SM01240">
    <property type="entry name" value="IMPDH"/>
    <property type="match status" value="1"/>
</dbReference>
<dbReference type="SUPFAM" id="SSF54631">
    <property type="entry name" value="CBS-domain pair"/>
    <property type="match status" value="1"/>
</dbReference>
<dbReference type="SUPFAM" id="SSF51412">
    <property type="entry name" value="Inosine monophosphate dehydrogenase (IMPDH)"/>
    <property type="match status" value="1"/>
</dbReference>
<dbReference type="PROSITE" id="PS51371">
    <property type="entry name" value="CBS"/>
    <property type="match status" value="2"/>
</dbReference>
<dbReference type="PROSITE" id="PS00487">
    <property type="entry name" value="IMP_DH_GMP_RED"/>
    <property type="match status" value="1"/>
</dbReference>
<accession>Q5KP44</accession>
<accession>Q55ZT3</accession>
<protein>
    <recommendedName>
        <fullName evidence="1">Inosine-5'-monophosphate dehydrogenase</fullName>
        <shortName evidence="1">IMP dehydrogenase</shortName>
        <shortName evidence="1">IMPD</shortName>
        <shortName evidence="1">IMPDH</shortName>
        <ecNumber evidence="1">1.1.1.205</ecNumber>
    </recommendedName>
</protein>
<name>IMDH_CRYNJ</name>
<comment type="function">
    <text evidence="1">Catalyzes the conversion of inosine 5'-phosphate (IMP) to xanthosine 5'-phosphate (XMP), the first committed and rate-limiting step in the de novo synthesis of guanine nucleotides, and therefore plays an important role in the regulation of cell growth.</text>
</comment>
<comment type="catalytic activity">
    <reaction evidence="1">
        <text>IMP + NAD(+) + H2O = XMP + NADH + H(+)</text>
        <dbReference type="Rhea" id="RHEA:11708"/>
        <dbReference type="ChEBI" id="CHEBI:15377"/>
        <dbReference type="ChEBI" id="CHEBI:15378"/>
        <dbReference type="ChEBI" id="CHEBI:57464"/>
        <dbReference type="ChEBI" id="CHEBI:57540"/>
        <dbReference type="ChEBI" id="CHEBI:57945"/>
        <dbReference type="ChEBI" id="CHEBI:58053"/>
        <dbReference type="EC" id="1.1.1.205"/>
    </reaction>
</comment>
<comment type="cofactor">
    <cofactor evidence="1">
        <name>K(+)</name>
        <dbReference type="ChEBI" id="CHEBI:29103"/>
    </cofactor>
</comment>
<comment type="activity regulation">
    <text evidence="1">Mycophenolic acid (MPA) is a non-competitive inhibitor that prevents formation of the closed enzyme conformation by binding to the same site as the amobile flap. In contrast, mizoribine monophosphate (MZP) is a competitive inhibitor that induces the closed conformation. MPA is a potent inhibitor of mammalian IMPDHs but a poor inhibitor of the bacterial enzymes. MZP is a more potent inhibitor of bacterial IMPDH.</text>
</comment>
<comment type="pathway">
    <text evidence="1">Purine metabolism; XMP biosynthesis via de novo pathway; XMP from IMP: step 1/1.</text>
</comment>
<comment type="subunit">
    <text evidence="1">Homotetramer.</text>
</comment>
<comment type="subcellular location">
    <subcellularLocation>
        <location evidence="1">Cytoplasm</location>
    </subcellularLocation>
</comment>
<comment type="similarity">
    <text evidence="1">Belongs to the IMPDH/GMPR family.</text>
</comment>
<keyword id="KW-0129">CBS domain</keyword>
<keyword id="KW-0963">Cytoplasm</keyword>
<keyword id="KW-0332">GMP biosynthesis</keyword>
<keyword id="KW-0479">Metal-binding</keyword>
<keyword id="KW-0520">NAD</keyword>
<keyword id="KW-0560">Oxidoreductase</keyword>
<keyword id="KW-0630">Potassium</keyword>
<keyword id="KW-0658">Purine biosynthesis</keyword>
<keyword id="KW-1185">Reference proteome</keyword>
<keyword id="KW-0677">Repeat</keyword>
<gene>
    <name type="ordered locus">CNA04240</name>
</gene>
<sequence length="544" mass="57899">MADTNPNAPPRSDSLLNPADALKYLEEYPRGDGLSLQELMDSRKNGGLTYNDFLVLPGHISFPASDVSLQSRATKNIVLNTPFLSSPMDTVTEDRMAIALALHGGLGIIHHNCSAEEQAAMVRRVKKYENGFITDPLCLGPDATVGDVLEIKAKFGFCGVPITETGAPNSKLLGIVTGRDVQFQDAETPIKSVMTTEVVTGSSPITLEKANSLLRETKKGKLPIVDSNGHLVSLVARSDLLKNQNYPYASKVPESKQLYCGAAIGTRPGDKDRLKLLAEAGLDVVVLDSSQGDSVYQIEFIKWIKQTYPKIEIIAGNVVTREQAAQLIAAGADGLRIGMGSGSICITQEVMAVGRPQGTAVYAVAEFASRFGIPCIADGGIGNIGHIAKALALGASAVMMGGLLAGTTESPGEYFYHEGKRVKVYRGMGSIEAMEHTQRGSASGKRSILNLDNAATARYFSEADAVKVAQGVSGDVADKGSINKFVPYLFTGLQHSFQDAGVKSVSELHSCARSGSLRFELRTASAQLEGGVHGLNSYTKRLFA</sequence>
<feature type="chain" id="PRO_0000415685" description="Inosine-5'-monophosphate dehydrogenase">
    <location>
        <begin position="1"/>
        <end position="544"/>
    </location>
</feature>
<feature type="domain" description="CBS 1" evidence="1">
    <location>
        <begin position="132"/>
        <end position="192"/>
    </location>
</feature>
<feature type="domain" description="CBS 2" evidence="1">
    <location>
        <begin position="194"/>
        <end position="250"/>
    </location>
</feature>
<feature type="active site" description="Thioimidate intermediate" evidence="1">
    <location>
        <position position="345"/>
    </location>
</feature>
<feature type="active site" description="Proton acceptor" evidence="1">
    <location>
        <position position="458"/>
    </location>
</feature>
<feature type="binding site" evidence="1">
    <location>
        <begin position="288"/>
        <end position="290"/>
    </location>
    <ligand>
        <name>NAD(+)</name>
        <dbReference type="ChEBI" id="CHEBI:57540"/>
    </ligand>
</feature>
<feature type="binding site" evidence="1">
    <location>
        <begin position="338"/>
        <end position="340"/>
    </location>
    <ligand>
        <name>NAD(+)</name>
        <dbReference type="ChEBI" id="CHEBI:57540"/>
    </ligand>
</feature>
<feature type="binding site" description="in other chain" evidence="1">
    <location>
        <position position="340"/>
    </location>
    <ligand>
        <name>K(+)</name>
        <dbReference type="ChEBI" id="CHEBI:29103"/>
        <note>ligand shared between two tetrameric partners</note>
    </ligand>
</feature>
<feature type="binding site" description="in other chain" evidence="1">
    <location>
        <position position="342"/>
    </location>
    <ligand>
        <name>K(+)</name>
        <dbReference type="ChEBI" id="CHEBI:29103"/>
        <note>ligand shared between two tetrameric partners</note>
    </ligand>
</feature>
<feature type="binding site" evidence="1">
    <location>
        <position position="343"/>
    </location>
    <ligand>
        <name>IMP</name>
        <dbReference type="ChEBI" id="CHEBI:58053"/>
    </ligand>
</feature>
<feature type="binding site" description="in other chain" evidence="1">
    <location>
        <position position="345"/>
    </location>
    <ligand>
        <name>K(+)</name>
        <dbReference type="ChEBI" id="CHEBI:29103"/>
        <note>ligand shared between two tetrameric partners</note>
    </ligand>
</feature>
<feature type="binding site" evidence="1">
    <location>
        <begin position="378"/>
        <end position="380"/>
    </location>
    <ligand>
        <name>IMP</name>
        <dbReference type="ChEBI" id="CHEBI:58053"/>
    </ligand>
</feature>
<feature type="binding site" evidence="1">
    <location>
        <begin position="401"/>
        <end position="402"/>
    </location>
    <ligand>
        <name>IMP</name>
        <dbReference type="ChEBI" id="CHEBI:58053"/>
    </ligand>
</feature>
<feature type="binding site" evidence="1">
    <location>
        <begin position="425"/>
        <end position="429"/>
    </location>
    <ligand>
        <name>IMP</name>
        <dbReference type="ChEBI" id="CHEBI:58053"/>
    </ligand>
</feature>
<feature type="binding site" evidence="1">
    <location>
        <position position="470"/>
    </location>
    <ligand>
        <name>IMP</name>
        <dbReference type="ChEBI" id="CHEBI:58053"/>
    </ligand>
</feature>
<feature type="binding site" evidence="1">
    <location>
        <position position="529"/>
    </location>
    <ligand>
        <name>K(+)</name>
        <dbReference type="ChEBI" id="CHEBI:29103"/>
        <note>ligand shared between two tetrameric partners</note>
    </ligand>
</feature>
<feature type="binding site" evidence="1">
    <location>
        <position position="530"/>
    </location>
    <ligand>
        <name>K(+)</name>
        <dbReference type="ChEBI" id="CHEBI:29103"/>
        <note>ligand shared between two tetrameric partners</note>
    </ligand>
</feature>
<feature type="binding site" evidence="1">
    <location>
        <position position="531"/>
    </location>
    <ligand>
        <name>K(+)</name>
        <dbReference type="ChEBI" id="CHEBI:29103"/>
        <note>ligand shared between two tetrameric partners</note>
    </ligand>
</feature>
<organism>
    <name type="scientific">Cryptococcus neoformans var. neoformans serotype D (strain JEC21 / ATCC MYA-565)</name>
    <name type="common">Filobasidiella neoformans</name>
    <dbReference type="NCBI Taxonomy" id="214684"/>
    <lineage>
        <taxon>Eukaryota</taxon>
        <taxon>Fungi</taxon>
        <taxon>Dikarya</taxon>
        <taxon>Basidiomycota</taxon>
        <taxon>Agaricomycotina</taxon>
        <taxon>Tremellomycetes</taxon>
        <taxon>Tremellales</taxon>
        <taxon>Cryptococcaceae</taxon>
        <taxon>Cryptococcus</taxon>
        <taxon>Cryptococcus neoformans species complex</taxon>
    </lineage>
</organism>
<evidence type="ECO:0000255" key="1">
    <source>
        <dbReference type="HAMAP-Rule" id="MF_03156"/>
    </source>
</evidence>
<reference key="1">
    <citation type="journal article" date="2005" name="Science">
        <title>The genome of the basidiomycetous yeast and human pathogen Cryptococcus neoformans.</title>
        <authorList>
            <person name="Loftus B.J."/>
            <person name="Fung E."/>
            <person name="Roncaglia P."/>
            <person name="Rowley D."/>
            <person name="Amedeo P."/>
            <person name="Bruno D."/>
            <person name="Vamathevan J."/>
            <person name="Miranda M."/>
            <person name="Anderson I.J."/>
            <person name="Fraser J.A."/>
            <person name="Allen J.E."/>
            <person name="Bosdet I.E."/>
            <person name="Brent M.R."/>
            <person name="Chiu R."/>
            <person name="Doering T.L."/>
            <person name="Donlin M.J."/>
            <person name="D'Souza C.A."/>
            <person name="Fox D.S."/>
            <person name="Grinberg V."/>
            <person name="Fu J."/>
            <person name="Fukushima M."/>
            <person name="Haas B.J."/>
            <person name="Huang J.C."/>
            <person name="Janbon G."/>
            <person name="Jones S.J.M."/>
            <person name="Koo H.L."/>
            <person name="Krzywinski M.I."/>
            <person name="Kwon-Chung K.J."/>
            <person name="Lengeler K.B."/>
            <person name="Maiti R."/>
            <person name="Marra M.A."/>
            <person name="Marra R.E."/>
            <person name="Mathewson C.A."/>
            <person name="Mitchell T.G."/>
            <person name="Pertea M."/>
            <person name="Riggs F.R."/>
            <person name="Salzberg S.L."/>
            <person name="Schein J.E."/>
            <person name="Shvartsbeyn A."/>
            <person name="Shin H."/>
            <person name="Shumway M."/>
            <person name="Specht C.A."/>
            <person name="Suh B.B."/>
            <person name="Tenney A."/>
            <person name="Utterback T.R."/>
            <person name="Wickes B.L."/>
            <person name="Wortman J.R."/>
            <person name="Wye N.H."/>
            <person name="Kronstad J.W."/>
            <person name="Lodge J.K."/>
            <person name="Heitman J."/>
            <person name="Davis R.W."/>
            <person name="Fraser C.M."/>
            <person name="Hyman R.W."/>
        </authorList>
    </citation>
    <scope>NUCLEOTIDE SEQUENCE [LARGE SCALE GENOMIC DNA]</scope>
    <source>
        <strain>JEC21 / ATCC MYA-565</strain>
    </source>
</reference>